<protein>
    <recommendedName>
        <fullName evidence="2">Oligoribonuclease</fullName>
        <ecNumber evidence="2">3.1.15.-</ecNumber>
    </recommendedName>
</protein>
<accession>Q5PLG7</accession>
<organism>
    <name type="scientific">Salmonella paratyphi A (strain ATCC 9150 / SARB42)</name>
    <dbReference type="NCBI Taxonomy" id="295319"/>
    <lineage>
        <taxon>Bacteria</taxon>
        <taxon>Pseudomonadati</taxon>
        <taxon>Pseudomonadota</taxon>
        <taxon>Gammaproteobacteria</taxon>
        <taxon>Enterobacterales</taxon>
        <taxon>Enterobacteriaceae</taxon>
        <taxon>Salmonella</taxon>
    </lineage>
</organism>
<sequence length="181" mass="20632">MSADENNLIWIDLEMTGLDPERDRIIEIATLVTDASLNILAEGPTIAVHQSDAQLALMDDWNVRTHTGSGLVDRVKASTMGERDAELATIEFLKTWVPAGKSPICGNSIGQDRRFLFKYMPELEAYFHYRYLDVSTLKELARRWKPEILAGFTKQGTHQAMDDIRESVAELAYYREHFIKL</sequence>
<gene>
    <name evidence="2" type="primary">orn</name>
    <name type="ordered locus">SPA4167</name>
</gene>
<comment type="function">
    <text evidence="2">3'-to-5' exoribonuclease specific for small oligoribonucleotides.</text>
</comment>
<comment type="subcellular location">
    <subcellularLocation>
        <location evidence="2">Cytoplasm</location>
    </subcellularLocation>
</comment>
<comment type="similarity">
    <text evidence="2">Belongs to the oligoribonuclease family.</text>
</comment>
<feature type="initiator methionine" description="Removed" evidence="1">
    <location>
        <position position="1"/>
    </location>
</feature>
<feature type="chain" id="PRO_0000111067" description="Oligoribonuclease">
    <location>
        <begin position="2"/>
        <end position="181"/>
    </location>
</feature>
<feature type="domain" description="Exonuclease" evidence="2">
    <location>
        <begin position="8"/>
        <end position="171"/>
    </location>
</feature>
<feature type="active site" evidence="2">
    <location>
        <position position="129"/>
    </location>
</feature>
<evidence type="ECO:0000250" key="1"/>
<evidence type="ECO:0000255" key="2">
    <source>
        <dbReference type="HAMAP-Rule" id="MF_00045"/>
    </source>
</evidence>
<dbReference type="EC" id="3.1.15.-" evidence="2"/>
<dbReference type="EMBL" id="CP000026">
    <property type="protein sequence ID" value="AAV79907.1"/>
    <property type="molecule type" value="Genomic_DNA"/>
</dbReference>
<dbReference type="RefSeq" id="WP_001271546.1">
    <property type="nucleotide sequence ID" value="NC_006511.1"/>
</dbReference>
<dbReference type="SMR" id="Q5PLG7"/>
<dbReference type="KEGG" id="spt:SPA4167"/>
<dbReference type="HOGENOM" id="CLU_064761_2_0_6"/>
<dbReference type="Proteomes" id="UP000008185">
    <property type="component" value="Chromosome"/>
</dbReference>
<dbReference type="GO" id="GO:0005737">
    <property type="term" value="C:cytoplasm"/>
    <property type="evidence" value="ECO:0007669"/>
    <property type="project" value="UniProtKB-SubCell"/>
</dbReference>
<dbReference type="GO" id="GO:0000175">
    <property type="term" value="F:3'-5'-RNA exonuclease activity"/>
    <property type="evidence" value="ECO:0007669"/>
    <property type="project" value="InterPro"/>
</dbReference>
<dbReference type="GO" id="GO:0003676">
    <property type="term" value="F:nucleic acid binding"/>
    <property type="evidence" value="ECO:0007669"/>
    <property type="project" value="InterPro"/>
</dbReference>
<dbReference type="GO" id="GO:0006259">
    <property type="term" value="P:DNA metabolic process"/>
    <property type="evidence" value="ECO:0007669"/>
    <property type="project" value="UniProtKB-ARBA"/>
</dbReference>
<dbReference type="CDD" id="cd06135">
    <property type="entry name" value="Orn"/>
    <property type="match status" value="1"/>
</dbReference>
<dbReference type="FunFam" id="3.30.420.10:FF:000003">
    <property type="entry name" value="Oligoribonuclease"/>
    <property type="match status" value="1"/>
</dbReference>
<dbReference type="Gene3D" id="3.30.420.10">
    <property type="entry name" value="Ribonuclease H-like superfamily/Ribonuclease H"/>
    <property type="match status" value="1"/>
</dbReference>
<dbReference type="HAMAP" id="MF_00045">
    <property type="entry name" value="Oligoribonuclease"/>
    <property type="match status" value="1"/>
</dbReference>
<dbReference type="InterPro" id="IPR013520">
    <property type="entry name" value="Exonuclease_RNaseT/DNA_pol3"/>
</dbReference>
<dbReference type="InterPro" id="IPR022894">
    <property type="entry name" value="Oligoribonuclease"/>
</dbReference>
<dbReference type="InterPro" id="IPR012337">
    <property type="entry name" value="RNaseH-like_sf"/>
</dbReference>
<dbReference type="InterPro" id="IPR036397">
    <property type="entry name" value="RNaseH_sf"/>
</dbReference>
<dbReference type="NCBIfam" id="NF003765">
    <property type="entry name" value="PRK05359.1"/>
    <property type="match status" value="1"/>
</dbReference>
<dbReference type="PANTHER" id="PTHR11046">
    <property type="entry name" value="OLIGORIBONUCLEASE, MITOCHONDRIAL"/>
    <property type="match status" value="1"/>
</dbReference>
<dbReference type="PANTHER" id="PTHR11046:SF0">
    <property type="entry name" value="OLIGORIBONUCLEASE, MITOCHONDRIAL"/>
    <property type="match status" value="1"/>
</dbReference>
<dbReference type="Pfam" id="PF00929">
    <property type="entry name" value="RNase_T"/>
    <property type="match status" value="1"/>
</dbReference>
<dbReference type="SMART" id="SM00479">
    <property type="entry name" value="EXOIII"/>
    <property type="match status" value="1"/>
</dbReference>
<dbReference type="SUPFAM" id="SSF53098">
    <property type="entry name" value="Ribonuclease H-like"/>
    <property type="match status" value="1"/>
</dbReference>
<proteinExistence type="inferred from homology"/>
<keyword id="KW-0963">Cytoplasm</keyword>
<keyword id="KW-0269">Exonuclease</keyword>
<keyword id="KW-0378">Hydrolase</keyword>
<keyword id="KW-0540">Nuclease</keyword>
<name>ORN_SALPA</name>
<reference key="1">
    <citation type="journal article" date="2004" name="Nat. Genet.">
        <title>Comparison of genome degradation in Paratyphi A and Typhi, human-restricted serovars of Salmonella enterica that cause typhoid.</title>
        <authorList>
            <person name="McClelland M."/>
            <person name="Sanderson K.E."/>
            <person name="Clifton S.W."/>
            <person name="Latreille P."/>
            <person name="Porwollik S."/>
            <person name="Sabo A."/>
            <person name="Meyer R."/>
            <person name="Bieri T."/>
            <person name="Ozersky P."/>
            <person name="McLellan M."/>
            <person name="Harkins C.R."/>
            <person name="Wang C."/>
            <person name="Nguyen C."/>
            <person name="Berghoff A."/>
            <person name="Elliott G."/>
            <person name="Kohlberg S."/>
            <person name="Strong C."/>
            <person name="Du F."/>
            <person name="Carter J."/>
            <person name="Kremizki C."/>
            <person name="Layman D."/>
            <person name="Leonard S."/>
            <person name="Sun H."/>
            <person name="Fulton L."/>
            <person name="Nash W."/>
            <person name="Miner T."/>
            <person name="Minx P."/>
            <person name="Delehaunty K."/>
            <person name="Fronick C."/>
            <person name="Magrini V."/>
            <person name="Nhan M."/>
            <person name="Warren W."/>
            <person name="Florea L."/>
            <person name="Spieth J."/>
            <person name="Wilson R.K."/>
        </authorList>
    </citation>
    <scope>NUCLEOTIDE SEQUENCE [LARGE SCALE GENOMIC DNA]</scope>
    <source>
        <strain>ATCC 9150 / SARB42</strain>
    </source>
</reference>